<gene>
    <name evidence="1" type="primary">leuS</name>
    <name type="ordered locus">YPTB1103</name>
</gene>
<feature type="chain" id="PRO_0000152125" description="Leucine--tRNA ligase">
    <location>
        <begin position="1"/>
        <end position="860"/>
    </location>
</feature>
<feature type="short sequence motif" description="'HIGH' region">
    <location>
        <begin position="42"/>
        <end position="52"/>
    </location>
</feature>
<feature type="short sequence motif" description="'KMSKS' region">
    <location>
        <begin position="619"/>
        <end position="623"/>
    </location>
</feature>
<feature type="binding site" evidence="1">
    <location>
        <position position="622"/>
    </location>
    <ligand>
        <name>ATP</name>
        <dbReference type="ChEBI" id="CHEBI:30616"/>
    </ligand>
</feature>
<organism>
    <name type="scientific">Yersinia pseudotuberculosis serotype I (strain IP32953)</name>
    <dbReference type="NCBI Taxonomy" id="273123"/>
    <lineage>
        <taxon>Bacteria</taxon>
        <taxon>Pseudomonadati</taxon>
        <taxon>Pseudomonadota</taxon>
        <taxon>Gammaproteobacteria</taxon>
        <taxon>Enterobacterales</taxon>
        <taxon>Yersiniaceae</taxon>
        <taxon>Yersinia</taxon>
    </lineage>
</organism>
<dbReference type="EC" id="6.1.1.4" evidence="1"/>
<dbReference type="EMBL" id="BX936398">
    <property type="protein sequence ID" value="CAH20343.1"/>
    <property type="molecule type" value="Genomic_DNA"/>
</dbReference>
<dbReference type="RefSeq" id="WP_002210333.1">
    <property type="nucleotide sequence ID" value="NZ_CP009712.1"/>
</dbReference>
<dbReference type="SMR" id="Q66DE3"/>
<dbReference type="GeneID" id="57976085"/>
<dbReference type="KEGG" id="ypo:BZ17_1440"/>
<dbReference type="KEGG" id="yps:YPTB1103"/>
<dbReference type="PATRIC" id="fig|273123.14.peg.1524"/>
<dbReference type="Proteomes" id="UP000001011">
    <property type="component" value="Chromosome"/>
</dbReference>
<dbReference type="GO" id="GO:0005829">
    <property type="term" value="C:cytosol"/>
    <property type="evidence" value="ECO:0007669"/>
    <property type="project" value="TreeGrafter"/>
</dbReference>
<dbReference type="GO" id="GO:0002161">
    <property type="term" value="F:aminoacyl-tRNA deacylase activity"/>
    <property type="evidence" value="ECO:0007669"/>
    <property type="project" value="InterPro"/>
</dbReference>
<dbReference type="GO" id="GO:0005524">
    <property type="term" value="F:ATP binding"/>
    <property type="evidence" value="ECO:0007669"/>
    <property type="project" value="UniProtKB-UniRule"/>
</dbReference>
<dbReference type="GO" id="GO:0004823">
    <property type="term" value="F:leucine-tRNA ligase activity"/>
    <property type="evidence" value="ECO:0007669"/>
    <property type="project" value="UniProtKB-UniRule"/>
</dbReference>
<dbReference type="GO" id="GO:0006429">
    <property type="term" value="P:leucyl-tRNA aminoacylation"/>
    <property type="evidence" value="ECO:0007669"/>
    <property type="project" value="UniProtKB-UniRule"/>
</dbReference>
<dbReference type="CDD" id="cd07958">
    <property type="entry name" value="Anticodon_Ia_Leu_BEm"/>
    <property type="match status" value="1"/>
</dbReference>
<dbReference type="CDD" id="cd00812">
    <property type="entry name" value="LeuRS_core"/>
    <property type="match status" value="1"/>
</dbReference>
<dbReference type="FunFam" id="1.10.730.10:FF:000002">
    <property type="entry name" value="Leucine--tRNA ligase"/>
    <property type="match status" value="2"/>
</dbReference>
<dbReference type="FunFam" id="2.20.28.290:FF:000001">
    <property type="entry name" value="Leucine--tRNA ligase"/>
    <property type="match status" value="1"/>
</dbReference>
<dbReference type="FunFam" id="3.10.20.590:FF:000001">
    <property type="entry name" value="Leucine--tRNA ligase"/>
    <property type="match status" value="1"/>
</dbReference>
<dbReference type="FunFam" id="3.40.50.620:FF:000003">
    <property type="entry name" value="Leucine--tRNA ligase"/>
    <property type="match status" value="1"/>
</dbReference>
<dbReference type="FunFam" id="3.40.50.620:FF:000124">
    <property type="entry name" value="Leucine--tRNA ligase"/>
    <property type="match status" value="1"/>
</dbReference>
<dbReference type="FunFam" id="3.90.740.10:FF:000012">
    <property type="entry name" value="Leucine--tRNA ligase"/>
    <property type="match status" value="1"/>
</dbReference>
<dbReference type="Gene3D" id="2.20.28.290">
    <property type="match status" value="1"/>
</dbReference>
<dbReference type="Gene3D" id="3.10.20.590">
    <property type="match status" value="1"/>
</dbReference>
<dbReference type="Gene3D" id="3.40.50.620">
    <property type="entry name" value="HUPs"/>
    <property type="match status" value="2"/>
</dbReference>
<dbReference type="Gene3D" id="1.10.730.10">
    <property type="entry name" value="Isoleucyl-tRNA Synthetase, Domain 1"/>
    <property type="match status" value="1"/>
</dbReference>
<dbReference type="Gene3D" id="3.90.740.10">
    <property type="entry name" value="Valyl/Leucyl/Isoleucyl-tRNA synthetase, editing domain"/>
    <property type="match status" value="1"/>
</dbReference>
<dbReference type="HAMAP" id="MF_00049_B">
    <property type="entry name" value="Leu_tRNA_synth_B"/>
    <property type="match status" value="1"/>
</dbReference>
<dbReference type="InterPro" id="IPR001412">
    <property type="entry name" value="aa-tRNA-synth_I_CS"/>
</dbReference>
<dbReference type="InterPro" id="IPR002300">
    <property type="entry name" value="aa-tRNA-synth_Ia"/>
</dbReference>
<dbReference type="InterPro" id="IPR002302">
    <property type="entry name" value="Leu-tRNA-ligase"/>
</dbReference>
<dbReference type="InterPro" id="IPR025709">
    <property type="entry name" value="Leu_tRNA-synth_edit"/>
</dbReference>
<dbReference type="InterPro" id="IPR013155">
    <property type="entry name" value="M/V/L/I-tRNA-synth_anticd-bd"/>
</dbReference>
<dbReference type="InterPro" id="IPR015413">
    <property type="entry name" value="Methionyl/Leucyl_tRNA_Synth"/>
</dbReference>
<dbReference type="InterPro" id="IPR014729">
    <property type="entry name" value="Rossmann-like_a/b/a_fold"/>
</dbReference>
<dbReference type="InterPro" id="IPR009080">
    <property type="entry name" value="tRNAsynth_Ia_anticodon-bd"/>
</dbReference>
<dbReference type="InterPro" id="IPR009008">
    <property type="entry name" value="Val/Leu/Ile-tRNA-synth_edit"/>
</dbReference>
<dbReference type="NCBIfam" id="TIGR00396">
    <property type="entry name" value="leuS_bact"/>
    <property type="match status" value="1"/>
</dbReference>
<dbReference type="PANTHER" id="PTHR43740:SF2">
    <property type="entry name" value="LEUCINE--TRNA LIGASE, MITOCHONDRIAL"/>
    <property type="match status" value="1"/>
</dbReference>
<dbReference type="PANTHER" id="PTHR43740">
    <property type="entry name" value="LEUCYL-TRNA SYNTHETASE"/>
    <property type="match status" value="1"/>
</dbReference>
<dbReference type="Pfam" id="PF08264">
    <property type="entry name" value="Anticodon_1"/>
    <property type="match status" value="1"/>
</dbReference>
<dbReference type="Pfam" id="PF00133">
    <property type="entry name" value="tRNA-synt_1"/>
    <property type="match status" value="2"/>
</dbReference>
<dbReference type="Pfam" id="PF13603">
    <property type="entry name" value="tRNA-synt_1_2"/>
    <property type="match status" value="1"/>
</dbReference>
<dbReference type="Pfam" id="PF09334">
    <property type="entry name" value="tRNA-synt_1g"/>
    <property type="match status" value="1"/>
</dbReference>
<dbReference type="PRINTS" id="PR00985">
    <property type="entry name" value="TRNASYNTHLEU"/>
</dbReference>
<dbReference type="SUPFAM" id="SSF47323">
    <property type="entry name" value="Anticodon-binding domain of a subclass of class I aminoacyl-tRNA synthetases"/>
    <property type="match status" value="1"/>
</dbReference>
<dbReference type="SUPFAM" id="SSF52374">
    <property type="entry name" value="Nucleotidylyl transferase"/>
    <property type="match status" value="1"/>
</dbReference>
<dbReference type="SUPFAM" id="SSF50677">
    <property type="entry name" value="ValRS/IleRS/LeuRS editing domain"/>
    <property type="match status" value="1"/>
</dbReference>
<dbReference type="PROSITE" id="PS00178">
    <property type="entry name" value="AA_TRNA_LIGASE_I"/>
    <property type="match status" value="1"/>
</dbReference>
<evidence type="ECO:0000255" key="1">
    <source>
        <dbReference type="HAMAP-Rule" id="MF_00049"/>
    </source>
</evidence>
<reference key="1">
    <citation type="journal article" date="2004" name="Proc. Natl. Acad. Sci. U.S.A.">
        <title>Insights into the evolution of Yersinia pestis through whole-genome comparison with Yersinia pseudotuberculosis.</title>
        <authorList>
            <person name="Chain P.S.G."/>
            <person name="Carniel E."/>
            <person name="Larimer F.W."/>
            <person name="Lamerdin J."/>
            <person name="Stoutland P.O."/>
            <person name="Regala W.M."/>
            <person name="Georgescu A.M."/>
            <person name="Vergez L.M."/>
            <person name="Land M.L."/>
            <person name="Motin V.L."/>
            <person name="Brubaker R.R."/>
            <person name="Fowler J."/>
            <person name="Hinnebusch J."/>
            <person name="Marceau M."/>
            <person name="Medigue C."/>
            <person name="Simonet M."/>
            <person name="Chenal-Francisque V."/>
            <person name="Souza B."/>
            <person name="Dacheux D."/>
            <person name="Elliott J.M."/>
            <person name="Derbise A."/>
            <person name="Hauser L.J."/>
            <person name="Garcia E."/>
        </authorList>
    </citation>
    <scope>NUCLEOTIDE SEQUENCE [LARGE SCALE GENOMIC DNA]</scope>
    <source>
        <strain>IP32953</strain>
    </source>
</reference>
<proteinExistence type="inferred from homology"/>
<protein>
    <recommendedName>
        <fullName evidence="1">Leucine--tRNA ligase</fullName>
        <ecNumber evidence="1">6.1.1.4</ecNumber>
    </recommendedName>
    <alternativeName>
        <fullName evidence="1">Leucyl-tRNA synthetase</fullName>
        <shortName evidence="1">LeuRS</shortName>
    </alternativeName>
</protein>
<name>SYL_YERPS</name>
<sequence length="860" mass="97051">MQEQYRPEDIETQVQLHWQEKQTFKVTEDASKEKYYCLSMLPYPSGRLHMGHVRNYTIGDVISRYQRMLGKNVLQPIGWDAFGLPAEGAAVKNNTAPAPWTYDNIEYMKNQLKLLGFGYDWDREIATCKPDYYRWEQWFFTKLYEKGMVYKKTSAVNWCPHDLTVLANEQVIDGCCWRCDTKVERKEIPQWFIKITDYAEQLLNDLDTLESWPEQVKTMQRNWIGRSEGVDIVFDVVDSEEKLSVYTTRPDTFMGVTYVAVAAGHPLSLQAAATNPALADFVAECRNTKVAEAEMATMEKKGMATGLYAIHPLTGEKLPIWAANFVLMDYGTGAVMAVPGHDARDWEFATKYNLPIKPVILAADGSEPDLSQEAMTEKGTLFNSGEFDGLNHEDGFNAIADKLVALGVGQRKVNYRLRDWGVSRQRYWGAPIPMVTLEDGTVVPTPEDQLPVILPEDVVMDGISSPIKADPEWAKTTVNGIPGLRETDTFDTFMESSWYYARYTCPQYDDGMLDPAAANYWLPVDQYVGGIEHAIMHLMYFRFFHKLLRDAGLVDSDEPAKRLLCQGMVLADAFYYTGNNGERIWVSPVDAIVERDDKGRIVKAVDAEGHELVYAGMSKMSKSKNNGIDPQVMVEKYGADTVRLFMMFASPAEMTLEWQESGVEGANRFLKRVWRLAFDHTAKGAVKPLDIASLTEEQKSLRRDLHKTIAKVTDDVGRRQTFNTAIAAVMELMNKLGRAPQETEQDRALMQEALLAVVRMLYPFTPHVCFSLWQALGGEGDIDTAPWPIADEQAMVEDSKLVVVQVNGKVRGRITVPADATEQQVRERAGQEHLVAKYLDGVTVRKVIYVPGKLLNLVVG</sequence>
<keyword id="KW-0030">Aminoacyl-tRNA synthetase</keyword>
<keyword id="KW-0067">ATP-binding</keyword>
<keyword id="KW-0963">Cytoplasm</keyword>
<keyword id="KW-0436">Ligase</keyword>
<keyword id="KW-0547">Nucleotide-binding</keyword>
<keyword id="KW-0648">Protein biosynthesis</keyword>
<comment type="catalytic activity">
    <reaction evidence="1">
        <text>tRNA(Leu) + L-leucine + ATP = L-leucyl-tRNA(Leu) + AMP + diphosphate</text>
        <dbReference type="Rhea" id="RHEA:11688"/>
        <dbReference type="Rhea" id="RHEA-COMP:9613"/>
        <dbReference type="Rhea" id="RHEA-COMP:9622"/>
        <dbReference type="ChEBI" id="CHEBI:30616"/>
        <dbReference type="ChEBI" id="CHEBI:33019"/>
        <dbReference type="ChEBI" id="CHEBI:57427"/>
        <dbReference type="ChEBI" id="CHEBI:78442"/>
        <dbReference type="ChEBI" id="CHEBI:78494"/>
        <dbReference type="ChEBI" id="CHEBI:456215"/>
        <dbReference type="EC" id="6.1.1.4"/>
    </reaction>
</comment>
<comment type="subcellular location">
    <subcellularLocation>
        <location evidence="1">Cytoplasm</location>
    </subcellularLocation>
</comment>
<comment type="similarity">
    <text evidence="1">Belongs to the class-I aminoacyl-tRNA synthetase family.</text>
</comment>
<accession>Q66DE3</accession>